<evidence type="ECO:0000255" key="1">
    <source>
        <dbReference type="HAMAP-Rule" id="MF_01337"/>
    </source>
</evidence>
<evidence type="ECO:0000305" key="2"/>
<keyword id="KW-0687">Ribonucleoprotein</keyword>
<keyword id="KW-0689">Ribosomal protein</keyword>
<keyword id="KW-0694">RNA-binding</keyword>
<keyword id="KW-0699">rRNA-binding</keyword>
<protein>
    <recommendedName>
        <fullName evidence="1">Large ribosomal subunit protein uL18</fullName>
    </recommendedName>
    <alternativeName>
        <fullName evidence="2">50S ribosomal protein L18</fullName>
    </alternativeName>
</protein>
<name>RL18_YERP3</name>
<dbReference type="EMBL" id="CP000720">
    <property type="protein sequence ID" value="ABS46653.1"/>
    <property type="molecule type" value="Genomic_DNA"/>
</dbReference>
<dbReference type="RefSeq" id="WP_002213336.1">
    <property type="nucleotide sequence ID" value="NC_009708.1"/>
</dbReference>
<dbReference type="SMR" id="A7FNL8"/>
<dbReference type="GeneID" id="97454247"/>
<dbReference type="KEGG" id="ypi:YpsIP31758_3898"/>
<dbReference type="HOGENOM" id="CLU_098841_0_1_6"/>
<dbReference type="Proteomes" id="UP000002412">
    <property type="component" value="Chromosome"/>
</dbReference>
<dbReference type="GO" id="GO:0022625">
    <property type="term" value="C:cytosolic large ribosomal subunit"/>
    <property type="evidence" value="ECO:0007669"/>
    <property type="project" value="TreeGrafter"/>
</dbReference>
<dbReference type="GO" id="GO:0008097">
    <property type="term" value="F:5S rRNA binding"/>
    <property type="evidence" value="ECO:0007669"/>
    <property type="project" value="TreeGrafter"/>
</dbReference>
<dbReference type="GO" id="GO:0003735">
    <property type="term" value="F:structural constituent of ribosome"/>
    <property type="evidence" value="ECO:0007669"/>
    <property type="project" value="InterPro"/>
</dbReference>
<dbReference type="GO" id="GO:0006412">
    <property type="term" value="P:translation"/>
    <property type="evidence" value="ECO:0007669"/>
    <property type="project" value="UniProtKB-UniRule"/>
</dbReference>
<dbReference type="CDD" id="cd00432">
    <property type="entry name" value="Ribosomal_L18_L5e"/>
    <property type="match status" value="1"/>
</dbReference>
<dbReference type="FunFam" id="3.30.420.100:FF:000001">
    <property type="entry name" value="50S ribosomal protein L18"/>
    <property type="match status" value="1"/>
</dbReference>
<dbReference type="Gene3D" id="3.30.420.100">
    <property type="match status" value="1"/>
</dbReference>
<dbReference type="HAMAP" id="MF_01337_B">
    <property type="entry name" value="Ribosomal_uL18_B"/>
    <property type="match status" value="1"/>
</dbReference>
<dbReference type="InterPro" id="IPR004389">
    <property type="entry name" value="Ribosomal_uL18_bac-type"/>
</dbReference>
<dbReference type="InterPro" id="IPR005484">
    <property type="entry name" value="Ribosomal_uL18_bac/euk"/>
</dbReference>
<dbReference type="NCBIfam" id="TIGR00060">
    <property type="entry name" value="L18_bact"/>
    <property type="match status" value="1"/>
</dbReference>
<dbReference type="PANTHER" id="PTHR12899">
    <property type="entry name" value="39S RIBOSOMAL PROTEIN L18, MITOCHONDRIAL"/>
    <property type="match status" value="1"/>
</dbReference>
<dbReference type="PANTHER" id="PTHR12899:SF3">
    <property type="entry name" value="LARGE RIBOSOMAL SUBUNIT PROTEIN UL18M"/>
    <property type="match status" value="1"/>
</dbReference>
<dbReference type="Pfam" id="PF00861">
    <property type="entry name" value="Ribosomal_L18p"/>
    <property type="match status" value="1"/>
</dbReference>
<dbReference type="SUPFAM" id="SSF53137">
    <property type="entry name" value="Translational machinery components"/>
    <property type="match status" value="1"/>
</dbReference>
<proteinExistence type="inferred from homology"/>
<feature type="chain" id="PRO_1000067646" description="Large ribosomal subunit protein uL18">
    <location>
        <begin position="1"/>
        <end position="117"/>
    </location>
</feature>
<reference key="1">
    <citation type="journal article" date="2007" name="PLoS Genet.">
        <title>The complete genome sequence of Yersinia pseudotuberculosis IP31758, the causative agent of Far East scarlet-like fever.</title>
        <authorList>
            <person name="Eppinger M."/>
            <person name="Rosovitz M.J."/>
            <person name="Fricke W.F."/>
            <person name="Rasko D.A."/>
            <person name="Kokorina G."/>
            <person name="Fayolle C."/>
            <person name="Lindler L.E."/>
            <person name="Carniel E."/>
            <person name="Ravel J."/>
        </authorList>
    </citation>
    <scope>NUCLEOTIDE SEQUENCE [LARGE SCALE GENOMIC DNA]</scope>
    <source>
        <strain>IP 31758</strain>
    </source>
</reference>
<comment type="function">
    <text evidence="1">This is one of the proteins that bind and probably mediate the attachment of the 5S RNA into the large ribosomal subunit, where it forms part of the central protuberance.</text>
</comment>
<comment type="subunit">
    <text evidence="1">Part of the 50S ribosomal subunit; part of the 5S rRNA/L5/L18/L25 subcomplex. Contacts the 5S and 23S rRNAs.</text>
</comment>
<comment type="similarity">
    <text evidence="1">Belongs to the universal ribosomal protein uL18 family.</text>
</comment>
<accession>A7FNL8</accession>
<sequence>MDKKAARIRRATRARRKLKELGATRLVVHRTPRHIYAQVIAPNGSEILVAASTVEKAINEQLKYAGNKDAAAAVGKTIAERALEKGITKVSFDRSGFQYHGRVQALADAAREAGLQF</sequence>
<gene>
    <name evidence="1" type="primary">rplR</name>
    <name type="ordered locus">YpsIP31758_3898</name>
</gene>
<organism>
    <name type="scientific">Yersinia pseudotuberculosis serotype O:1b (strain IP 31758)</name>
    <dbReference type="NCBI Taxonomy" id="349747"/>
    <lineage>
        <taxon>Bacteria</taxon>
        <taxon>Pseudomonadati</taxon>
        <taxon>Pseudomonadota</taxon>
        <taxon>Gammaproteobacteria</taxon>
        <taxon>Enterobacterales</taxon>
        <taxon>Yersiniaceae</taxon>
        <taxon>Yersinia</taxon>
    </lineage>
</organism>